<dbReference type="EMBL" id="AF081201">
    <property type="protein sequence ID" value="AAC31605.1"/>
    <property type="molecule type" value="mRNA"/>
</dbReference>
<dbReference type="EMBL" id="AC007113">
    <property type="protein sequence ID" value="AAD23629.2"/>
    <property type="molecule type" value="Genomic_DNA"/>
</dbReference>
<dbReference type="EMBL" id="CP002685">
    <property type="protein sequence ID" value="AEC08315.1"/>
    <property type="molecule type" value="Genomic_DNA"/>
</dbReference>
<dbReference type="EMBL" id="CP002685">
    <property type="protein sequence ID" value="ANM61989.1"/>
    <property type="molecule type" value="Genomic_DNA"/>
</dbReference>
<dbReference type="PIR" id="H84701">
    <property type="entry name" value="H84701"/>
</dbReference>
<dbReference type="PIR" id="T50671">
    <property type="entry name" value="T50671"/>
</dbReference>
<dbReference type="RefSeq" id="NP_001324173.1">
    <molecule id="O81643-1"/>
    <property type="nucleotide sequence ID" value="NM_001336228.1"/>
</dbReference>
<dbReference type="RefSeq" id="NP_029567.1">
    <molecule id="O81643-1"/>
    <property type="nucleotide sequence ID" value="NM_128543.4"/>
</dbReference>
<dbReference type="SMR" id="O81643"/>
<dbReference type="BioGRID" id="2889">
    <property type="interactions" value="1"/>
</dbReference>
<dbReference type="FunCoup" id="O81643">
    <property type="interactions" value="501"/>
</dbReference>
<dbReference type="STRING" id="3702.O81643"/>
<dbReference type="iPTMnet" id="O81643"/>
<dbReference type="PaxDb" id="3702-AT2G29890.3"/>
<dbReference type="ProteomicsDB" id="242664">
    <molecule id="O81643-1"/>
</dbReference>
<dbReference type="EnsemblPlants" id="AT2G29890.1">
    <molecule id="O81643-1"/>
    <property type="protein sequence ID" value="AT2G29890.1"/>
    <property type="gene ID" value="AT2G29890"/>
</dbReference>
<dbReference type="EnsemblPlants" id="AT2G29890.5">
    <molecule id="O81643-1"/>
    <property type="protein sequence ID" value="AT2G29890.5"/>
    <property type="gene ID" value="AT2G29890"/>
</dbReference>
<dbReference type="GeneID" id="817539"/>
<dbReference type="Gramene" id="AT2G29890.1">
    <molecule id="O81643-1"/>
    <property type="protein sequence ID" value="AT2G29890.1"/>
    <property type="gene ID" value="AT2G29890"/>
</dbReference>
<dbReference type="Gramene" id="AT2G29890.5">
    <molecule id="O81643-1"/>
    <property type="protein sequence ID" value="AT2G29890.5"/>
    <property type="gene ID" value="AT2G29890"/>
</dbReference>
<dbReference type="KEGG" id="ath:AT2G29890"/>
<dbReference type="Araport" id="AT2G29890"/>
<dbReference type="TAIR" id="AT2G29890">
    <property type="gene designation" value="VLN1"/>
</dbReference>
<dbReference type="eggNOG" id="KOG0443">
    <property type="taxonomic scope" value="Eukaryota"/>
</dbReference>
<dbReference type="InParanoid" id="O81643"/>
<dbReference type="OMA" id="GHESTDF"/>
<dbReference type="PhylomeDB" id="O81643"/>
<dbReference type="PRO" id="PR:O81643"/>
<dbReference type="Proteomes" id="UP000006548">
    <property type="component" value="Chromosome 2"/>
</dbReference>
<dbReference type="ExpressionAtlas" id="O81643">
    <property type="expression patterns" value="baseline and differential"/>
</dbReference>
<dbReference type="GO" id="GO:0005737">
    <property type="term" value="C:cytoplasm"/>
    <property type="evidence" value="ECO:0007669"/>
    <property type="project" value="UniProtKB-KW"/>
</dbReference>
<dbReference type="GO" id="GO:0005856">
    <property type="term" value="C:cytoskeleton"/>
    <property type="evidence" value="ECO:0007669"/>
    <property type="project" value="UniProtKB-SubCell"/>
</dbReference>
<dbReference type="GO" id="GO:0051015">
    <property type="term" value="F:actin filament binding"/>
    <property type="evidence" value="ECO:0007669"/>
    <property type="project" value="InterPro"/>
</dbReference>
<dbReference type="GO" id="GO:0051693">
    <property type="term" value="P:actin filament capping"/>
    <property type="evidence" value="ECO:0007669"/>
    <property type="project" value="UniProtKB-KW"/>
</dbReference>
<dbReference type="GO" id="GO:0007015">
    <property type="term" value="P:actin filament organization"/>
    <property type="evidence" value="ECO:0007669"/>
    <property type="project" value="UniProtKB-ARBA"/>
</dbReference>
<dbReference type="CDD" id="cd11290">
    <property type="entry name" value="gelsolin_S1_like"/>
    <property type="match status" value="1"/>
</dbReference>
<dbReference type="CDD" id="cd11289">
    <property type="entry name" value="gelsolin_S2_like"/>
    <property type="match status" value="1"/>
</dbReference>
<dbReference type="CDD" id="cd11292">
    <property type="entry name" value="gelsolin_S3_like"/>
    <property type="match status" value="1"/>
</dbReference>
<dbReference type="CDD" id="cd11293">
    <property type="entry name" value="gelsolin_S4_like"/>
    <property type="match status" value="1"/>
</dbReference>
<dbReference type="CDD" id="cd11288">
    <property type="entry name" value="gelsolin_S5_like"/>
    <property type="match status" value="1"/>
</dbReference>
<dbReference type="CDD" id="cd11291">
    <property type="entry name" value="gelsolin_S6_like"/>
    <property type="match status" value="1"/>
</dbReference>
<dbReference type="FunFam" id="3.40.20.10:FF:000001">
    <property type="entry name" value="Gelsolin"/>
    <property type="match status" value="1"/>
</dbReference>
<dbReference type="FunFam" id="3.40.20.10:FF:000038">
    <property type="entry name" value="Villin-like 1"/>
    <property type="match status" value="1"/>
</dbReference>
<dbReference type="FunFam" id="3.40.20.10:FF:000093">
    <property type="entry name" value="Villin-like 1"/>
    <property type="match status" value="1"/>
</dbReference>
<dbReference type="Gene3D" id="3.40.20.10">
    <property type="entry name" value="Severin"/>
    <property type="match status" value="6"/>
</dbReference>
<dbReference type="Gene3D" id="1.10.950.10">
    <property type="entry name" value="Villin headpiece domain"/>
    <property type="match status" value="1"/>
</dbReference>
<dbReference type="InterPro" id="IPR029006">
    <property type="entry name" value="ADF-H/Gelsolin-like_dom_sf"/>
</dbReference>
<dbReference type="InterPro" id="IPR007123">
    <property type="entry name" value="Gelsolin-like_dom"/>
</dbReference>
<dbReference type="InterPro" id="IPR007122">
    <property type="entry name" value="Villin/Gelsolin"/>
</dbReference>
<dbReference type="InterPro" id="IPR003128">
    <property type="entry name" value="Villin_headpiece"/>
</dbReference>
<dbReference type="InterPro" id="IPR036886">
    <property type="entry name" value="Villin_headpiece_dom_sf"/>
</dbReference>
<dbReference type="PANTHER" id="PTHR11977">
    <property type="entry name" value="VILLIN"/>
    <property type="match status" value="1"/>
</dbReference>
<dbReference type="PANTHER" id="PTHR11977:SF25">
    <property type="entry name" value="VILLIN-1"/>
    <property type="match status" value="1"/>
</dbReference>
<dbReference type="Pfam" id="PF00626">
    <property type="entry name" value="Gelsolin"/>
    <property type="match status" value="4"/>
</dbReference>
<dbReference type="Pfam" id="PF02209">
    <property type="entry name" value="VHP"/>
    <property type="match status" value="1"/>
</dbReference>
<dbReference type="PRINTS" id="PR00597">
    <property type="entry name" value="GELSOLIN"/>
</dbReference>
<dbReference type="SMART" id="SM00262">
    <property type="entry name" value="GEL"/>
    <property type="match status" value="6"/>
</dbReference>
<dbReference type="SMART" id="SM00153">
    <property type="entry name" value="VHP"/>
    <property type="match status" value="1"/>
</dbReference>
<dbReference type="SUPFAM" id="SSF55753">
    <property type="entry name" value="Actin depolymerizing proteins"/>
    <property type="match status" value="6"/>
</dbReference>
<dbReference type="SUPFAM" id="SSF47050">
    <property type="entry name" value="VHP, Villin headpiece domain"/>
    <property type="match status" value="1"/>
</dbReference>
<dbReference type="PROSITE" id="PS51089">
    <property type="entry name" value="HP"/>
    <property type="match status" value="1"/>
</dbReference>
<comment type="function">
    <text evidence="5 6 7">Binds actin and actin filament bundles in a Ca(2+)/calmodulin-insensitive manner, but is unable to sever, cap, and nucleate actin filament formation in vitro. Does not protect individual filaments from severing by VLN3 (AC O81645).</text>
</comment>
<comment type="subcellular location">
    <subcellularLocation>
        <location evidence="5">Cytoplasm</location>
        <location evidence="5">Cytoskeleton</location>
    </subcellularLocation>
</comment>
<comment type="alternative products">
    <event type="alternative splicing"/>
    <isoform>
        <id>O81643-1</id>
        <name>1</name>
        <sequence type="displayed"/>
    </isoform>
    <text>A number of isoforms are produced. According to EST sequences.</text>
</comment>
<comment type="tissue specificity">
    <text evidence="5 7">Expressed in all tissues examined. Mainly detected in the vascular tissue and the pericycle of roots and in the vasculature of leaves. Not expressed in the root cap.</text>
</comment>
<comment type="similarity">
    <text evidence="9">Belongs to the villin/gelsolin family.</text>
</comment>
<sequence>MSRLSKDIDSAFQGVGTKSGLEIWCVYNKQLISIPKSSFGKFHSGNAYLVLRTFLRKIESPQYDIHYWLGIDANEVDSILASDKALDLDAALGCCTVQYREVQGQETEKFLSYFKPCIIPVEGKYSPKTGIAGETYQVTLLRCKGDHVVRVKEVPFLRSSLNHDDVFILDTASKVFLFAGCNSSTQEKAKAMEVVEYIKDNKHDGRCEVATIEDGKFSGDSDAGEFWSFFGGYAPIPKLSSSTTQEQTQTPCAELFWIDTKGNLHPTGTSSLDKDMLEKNKCYMLDCHSEVFVWMGRNTSLTERKTSISSSEEFLRKEGRSTTTSLVLLTEGLENARFRSFFNKWPQTVESSLYNEGREKVAALFKQKGYDVEELPDEEDDPLYTNCRDNLKVWRVDGDDVSLLSIPDQTKLFTGDCYLVQYKYTYKERTEHLLYVWIGCESIQQDRADAITNASAIVGTTKGESVLCHIYQGNEPSRFFPMFQSLVVFKGGLSRRYKVLLAEKEKIGEEYNENKASLFRVVGTSPRNMQAIQVNLVATSLNSSYSYILQYGASAFTWIGKLSSDSDHEVLDRMLYFLDTSCQPIYIREGNETDTFWNLLGGKSEYPKEKEMRKQIEEPHLFTCSCSSDVLKVKEIYNFVQDDLTTEDVFLLDCQSEVYVWIGSNSNIKSKEEALTLGLKFLEMDILEEGLTMRTPVYVVTEGHEPPFFTRFFEWVPEKANMHGNSFERKLASLKGKKTSTKRSSGSQYRSQSKDNASRDLQSRSVSSNGSERGVSPCSSEKLLSLSSAEDMTNSSNSTPVVKKLFSESLLVDPNDGVARQESSSKSDISKQKPRVGINSDLSSLESLAYSYEQLRVDSQKPVTDIDATRREAYLTEKEFEERFGMAKSEFYALPKWKQNKLKISLHLF</sequence>
<organism>
    <name type="scientific">Arabidopsis thaliana</name>
    <name type="common">Mouse-ear cress</name>
    <dbReference type="NCBI Taxonomy" id="3702"/>
    <lineage>
        <taxon>Eukaryota</taxon>
        <taxon>Viridiplantae</taxon>
        <taxon>Streptophyta</taxon>
        <taxon>Embryophyta</taxon>
        <taxon>Tracheophyta</taxon>
        <taxon>Spermatophyta</taxon>
        <taxon>Magnoliopsida</taxon>
        <taxon>eudicotyledons</taxon>
        <taxon>Gunneridae</taxon>
        <taxon>Pentapetalae</taxon>
        <taxon>rosids</taxon>
        <taxon>malvids</taxon>
        <taxon>Brassicales</taxon>
        <taxon>Brassicaceae</taxon>
        <taxon>Camelineae</taxon>
        <taxon>Arabidopsis</taxon>
    </lineage>
</organism>
<keyword id="KW-0117">Actin capping</keyword>
<keyword id="KW-0009">Actin-binding</keyword>
<keyword id="KW-0025">Alternative splicing</keyword>
<keyword id="KW-0106">Calcium</keyword>
<keyword id="KW-0963">Cytoplasm</keyword>
<keyword id="KW-0206">Cytoskeleton</keyword>
<keyword id="KW-0597">Phosphoprotein</keyword>
<keyword id="KW-1185">Reference proteome</keyword>
<keyword id="KW-0677">Repeat</keyword>
<protein>
    <recommendedName>
        <fullName evidence="8">Villin-1</fullName>
    </recommendedName>
</protein>
<gene>
    <name evidence="8" type="primary">VLN1</name>
    <name evidence="10" type="ordered locus">At2g29890</name>
    <name evidence="11" type="ORF">F6K5.2</name>
    <name type="ORF">T27A16.1</name>
</gene>
<reference key="1">
    <citation type="journal article" date="2000" name="Plant Physiol.">
        <title>Villin-like actin-binding proteins are expressed ubiquitously in Arabidopsis.</title>
        <authorList>
            <person name="Klahre U."/>
            <person name="Friederich E."/>
            <person name="Kost B."/>
            <person name="Louvard D."/>
            <person name="Chua N.-H."/>
        </authorList>
    </citation>
    <scope>NUCLEOTIDE SEQUENCE [MRNA]</scope>
    <scope>TISSUE SPECIFICITY</scope>
    <scope>FUNCTION</scope>
    <scope>SUBCELLULAR LOCATION</scope>
    <scope>ALTERNATIVE SPLICING</scope>
    <scope>GENE FAMILY</scope>
    <scope>NOMENCLATURE</scope>
    <source>
        <strain>cv. Landsberg erecta</strain>
    </source>
</reference>
<reference key="2">
    <citation type="journal article" date="1999" name="Nature">
        <title>Sequence and analysis of chromosome 2 of the plant Arabidopsis thaliana.</title>
        <authorList>
            <person name="Lin X."/>
            <person name="Kaul S."/>
            <person name="Rounsley S.D."/>
            <person name="Shea T.P."/>
            <person name="Benito M.-I."/>
            <person name="Town C.D."/>
            <person name="Fujii C.Y."/>
            <person name="Mason T.M."/>
            <person name="Bowman C.L."/>
            <person name="Barnstead M.E."/>
            <person name="Feldblyum T.V."/>
            <person name="Buell C.R."/>
            <person name="Ketchum K.A."/>
            <person name="Lee J.J."/>
            <person name="Ronning C.M."/>
            <person name="Koo H.L."/>
            <person name="Moffat K.S."/>
            <person name="Cronin L.A."/>
            <person name="Shen M."/>
            <person name="Pai G."/>
            <person name="Van Aken S."/>
            <person name="Umayam L."/>
            <person name="Tallon L.J."/>
            <person name="Gill J.E."/>
            <person name="Adams M.D."/>
            <person name="Carrera A.J."/>
            <person name="Creasy T.H."/>
            <person name="Goodman H.M."/>
            <person name="Somerville C.R."/>
            <person name="Copenhaver G.P."/>
            <person name="Preuss D."/>
            <person name="Nierman W.C."/>
            <person name="White O."/>
            <person name="Eisen J.A."/>
            <person name="Salzberg S.L."/>
            <person name="Fraser C.M."/>
            <person name="Venter J.C."/>
        </authorList>
    </citation>
    <scope>NUCLEOTIDE SEQUENCE [LARGE SCALE GENOMIC DNA]</scope>
    <source>
        <strain>cv. Columbia</strain>
    </source>
</reference>
<reference key="3">
    <citation type="journal article" date="2017" name="Plant J.">
        <title>Araport11: a complete reannotation of the Arabidopsis thaliana reference genome.</title>
        <authorList>
            <person name="Cheng C.Y."/>
            <person name="Krishnakumar V."/>
            <person name="Chan A.P."/>
            <person name="Thibaud-Nissen F."/>
            <person name="Schobel S."/>
            <person name="Town C.D."/>
        </authorList>
    </citation>
    <scope>GENOME REANNOTATION</scope>
    <source>
        <strain>cv. Columbia</strain>
    </source>
</reference>
<reference key="4">
    <citation type="journal article" date="2005" name="Plant Cell">
        <title>Arabidopsis VILLIN1 generates actin filament cables that are resistant to depolymerization.</title>
        <authorList>
            <person name="Huang S."/>
            <person name="Robinson R.C."/>
            <person name="Gao L.Y."/>
            <person name="Matsumoto T."/>
            <person name="Brunet A."/>
            <person name="Blanchoin L."/>
            <person name="Staiger C.J."/>
        </authorList>
    </citation>
    <scope>FUNCTION</scope>
</reference>
<reference key="5">
    <citation type="journal article" date="2010" name="Plant Cell">
        <title>Arabidopsis VILLIN1 and VILLIN3 have overlapping and distinct activities in actin bundle formation and turnover.</title>
        <authorList>
            <person name="Khurana P."/>
            <person name="Henty J.L."/>
            <person name="Huang S."/>
            <person name="Staiger A.M."/>
            <person name="Blanchoin L."/>
            <person name="Staiger C.J."/>
        </authorList>
    </citation>
    <scope>FUNCTION</scope>
    <scope>TISSUE SPECIFICITY</scope>
</reference>
<name>VILI1_ARATH</name>
<evidence type="ECO:0000250" key="1">
    <source>
        <dbReference type="UniProtKB" id="O65570"/>
    </source>
</evidence>
<evidence type="ECO:0000255" key="2"/>
<evidence type="ECO:0000255" key="3">
    <source>
        <dbReference type="PROSITE-ProRule" id="PRU00595"/>
    </source>
</evidence>
<evidence type="ECO:0000256" key="4">
    <source>
        <dbReference type="SAM" id="MobiDB-lite"/>
    </source>
</evidence>
<evidence type="ECO:0000269" key="5">
    <source>
    </source>
</evidence>
<evidence type="ECO:0000269" key="6">
    <source>
    </source>
</evidence>
<evidence type="ECO:0000269" key="7">
    <source>
    </source>
</evidence>
<evidence type="ECO:0000303" key="8">
    <source>
    </source>
</evidence>
<evidence type="ECO:0000305" key="9"/>
<evidence type="ECO:0000312" key="10">
    <source>
        <dbReference type="Araport" id="AT2G29890"/>
    </source>
</evidence>
<evidence type="ECO:0000312" key="11">
    <source>
        <dbReference type="EMBL" id="AAD23629.2"/>
    </source>
</evidence>
<feature type="chain" id="PRO_0000218732" description="Villin-1">
    <location>
        <begin position="1"/>
        <end position="909"/>
    </location>
</feature>
<feature type="repeat" description="Gelsolin-like 1" evidence="2">
    <location>
        <begin position="29"/>
        <end position="79"/>
    </location>
</feature>
<feature type="repeat" description="Gelsolin-like 2" evidence="2">
    <location>
        <begin position="149"/>
        <end position="189"/>
    </location>
</feature>
<feature type="repeat" description="Gelsolin-like 3" evidence="2">
    <location>
        <begin position="262"/>
        <end position="305"/>
    </location>
</feature>
<feature type="repeat" description="Gelsolin-like 4" evidence="2">
    <location>
        <begin position="391"/>
        <end position="448"/>
    </location>
</feature>
<feature type="repeat" description="Gelsolin-like 5" evidence="2">
    <location>
        <begin position="529"/>
        <end position="569"/>
    </location>
</feature>
<feature type="repeat" description="Gelsolin-like 6" evidence="2">
    <location>
        <begin position="631"/>
        <end position="672"/>
    </location>
</feature>
<feature type="domain" description="HP" evidence="3">
    <location>
        <begin position="844"/>
        <end position="909"/>
    </location>
</feature>
<feature type="region of interest" description="Disordered" evidence="4">
    <location>
        <begin position="733"/>
        <end position="781"/>
    </location>
</feature>
<feature type="region of interest" description="Disordered" evidence="4">
    <location>
        <begin position="816"/>
        <end position="835"/>
    </location>
</feature>
<feature type="compositionally biased region" description="Basic and acidic residues" evidence="4">
    <location>
        <begin position="752"/>
        <end position="762"/>
    </location>
</feature>
<feature type="modified residue" description="Phosphoserine" evidence="1">
    <location>
        <position position="780"/>
    </location>
</feature>
<feature type="sequence conflict" description="In Ref. 1; AAC31605." evidence="9" ref="1">
    <original>I</original>
    <variation>F</variation>
    <location>
        <position position="8"/>
    </location>
</feature>
<feature type="sequence conflict" description="In Ref. 1; AAC31605." evidence="9" ref="1">
    <original>QTVESSL</original>
    <variation>SDRWSLAF</variation>
    <location>
        <begin position="347"/>
        <end position="353"/>
    </location>
</feature>
<feature type="sequence conflict" description="In Ref. 1; AAC31605." evidence="9" ref="1">
    <original>I</original>
    <variation>T</variation>
    <location>
        <position position="585"/>
    </location>
</feature>
<feature type="sequence conflict" description="In Ref. 1; AAC31605." evidence="9" ref="1">
    <original>L</original>
    <variation>V</variation>
    <location>
        <position position="811"/>
    </location>
</feature>
<accession>O81643</accession>
<accession>O82367</accession>
<accession>Q9SIK8</accession>
<proteinExistence type="evidence at transcript level"/>